<sequence length="477" mass="50564">MNSIDLSRVHMIGIGGAGMSGVARILLSCGSVVSGSDVKESRPVAALRAMGATIAVGHKAENLAISGSMPTVVVTSFAAIPQDNPELQEARANNIPVIRRSDLLGELMEDHQQVLIAGTHGKTSTTSMAVVALQAAGKDPSFAIGGQLNKAGTNAHDGTGKAFVAEADESDASLLRYKPDIAVVTNIEPDHLDFFKTSEAYFKVFDDFAERVQPGGTLVVCLDDPHAAALGEKFKDRMTVRGYGSPAAAQQYPDVAFTVVEHMEVGPAGTRARITVGDDTVDVIMRIPGHHMVLNACAALTAGVTAGAELERLAAGISDFSGVRRRFEFHGRVSGGAFHDAEVYDDYAHHPTEVTAVLKAARQQQEARGIGRVVVAFQPHLYSRTMEFAAEFAEALSLADHAVILDIFGAREQPVEGVDSRIISDKMTIPVVFEPNFSAVAAQVKKIAQPNDIIVTMGAGSVTLLADEILTALRESE</sequence>
<proteinExistence type="inferred from homology"/>
<protein>
    <recommendedName>
        <fullName evidence="1">UDP-N-acetylmuramate--L-alanine ligase</fullName>
        <ecNumber evidence="1">6.3.2.8</ecNumber>
    </recommendedName>
    <alternativeName>
        <fullName evidence="1">UDP-N-acetylmuramoyl-L-alanine synthetase</fullName>
    </alternativeName>
</protein>
<comment type="function">
    <text evidence="1">Cell wall formation.</text>
</comment>
<comment type="catalytic activity">
    <reaction evidence="1">
        <text>UDP-N-acetyl-alpha-D-muramate + L-alanine + ATP = UDP-N-acetyl-alpha-D-muramoyl-L-alanine + ADP + phosphate + H(+)</text>
        <dbReference type="Rhea" id="RHEA:23372"/>
        <dbReference type="ChEBI" id="CHEBI:15378"/>
        <dbReference type="ChEBI" id="CHEBI:30616"/>
        <dbReference type="ChEBI" id="CHEBI:43474"/>
        <dbReference type="ChEBI" id="CHEBI:57972"/>
        <dbReference type="ChEBI" id="CHEBI:70757"/>
        <dbReference type="ChEBI" id="CHEBI:83898"/>
        <dbReference type="ChEBI" id="CHEBI:456216"/>
        <dbReference type="EC" id="6.3.2.8"/>
    </reaction>
</comment>
<comment type="pathway">
    <text evidence="1">Cell wall biogenesis; peptidoglycan biosynthesis.</text>
</comment>
<comment type="subcellular location">
    <subcellularLocation>
        <location evidence="1">Cytoplasm</location>
    </subcellularLocation>
</comment>
<comment type="similarity">
    <text evidence="1">Belongs to the MurCDEF family.</text>
</comment>
<organism>
    <name type="scientific">Corynebacterium diphtheriae (strain ATCC 700971 / NCTC 13129 / Biotype gravis)</name>
    <dbReference type="NCBI Taxonomy" id="257309"/>
    <lineage>
        <taxon>Bacteria</taxon>
        <taxon>Bacillati</taxon>
        <taxon>Actinomycetota</taxon>
        <taxon>Actinomycetes</taxon>
        <taxon>Mycobacteriales</taxon>
        <taxon>Corynebacteriaceae</taxon>
        <taxon>Corynebacterium</taxon>
    </lineage>
</organism>
<evidence type="ECO:0000255" key="1">
    <source>
        <dbReference type="HAMAP-Rule" id="MF_00046"/>
    </source>
</evidence>
<feature type="chain" id="PRO_0000182082" description="UDP-N-acetylmuramate--L-alanine ligase">
    <location>
        <begin position="1"/>
        <end position="477"/>
    </location>
</feature>
<feature type="binding site" evidence="1">
    <location>
        <begin position="118"/>
        <end position="124"/>
    </location>
    <ligand>
        <name>ATP</name>
        <dbReference type="ChEBI" id="CHEBI:30616"/>
    </ligand>
</feature>
<name>MURC_CORDI</name>
<gene>
    <name evidence="1" type="primary">murC</name>
    <name type="ordered locus">DIP1597</name>
</gene>
<keyword id="KW-0067">ATP-binding</keyword>
<keyword id="KW-0131">Cell cycle</keyword>
<keyword id="KW-0132">Cell division</keyword>
<keyword id="KW-0133">Cell shape</keyword>
<keyword id="KW-0961">Cell wall biogenesis/degradation</keyword>
<keyword id="KW-0963">Cytoplasm</keyword>
<keyword id="KW-0436">Ligase</keyword>
<keyword id="KW-0547">Nucleotide-binding</keyword>
<keyword id="KW-0573">Peptidoglycan synthesis</keyword>
<keyword id="KW-1185">Reference proteome</keyword>
<dbReference type="EC" id="6.3.2.8" evidence="1"/>
<dbReference type="EMBL" id="BX248358">
    <property type="protein sequence ID" value="CAE50122.1"/>
    <property type="molecule type" value="Genomic_DNA"/>
</dbReference>
<dbReference type="RefSeq" id="WP_010935184.1">
    <property type="nucleotide sequence ID" value="NC_002935.2"/>
</dbReference>
<dbReference type="SMR" id="P61677"/>
<dbReference type="STRING" id="257309.DIP1597"/>
<dbReference type="KEGG" id="cdi:DIP1597"/>
<dbReference type="HOGENOM" id="CLU_028104_2_1_11"/>
<dbReference type="UniPathway" id="UPA00219"/>
<dbReference type="Proteomes" id="UP000002198">
    <property type="component" value="Chromosome"/>
</dbReference>
<dbReference type="GO" id="GO:0005737">
    <property type="term" value="C:cytoplasm"/>
    <property type="evidence" value="ECO:0007669"/>
    <property type="project" value="UniProtKB-SubCell"/>
</dbReference>
<dbReference type="GO" id="GO:0005524">
    <property type="term" value="F:ATP binding"/>
    <property type="evidence" value="ECO:0007669"/>
    <property type="project" value="UniProtKB-UniRule"/>
</dbReference>
<dbReference type="GO" id="GO:0008763">
    <property type="term" value="F:UDP-N-acetylmuramate-L-alanine ligase activity"/>
    <property type="evidence" value="ECO:0007669"/>
    <property type="project" value="UniProtKB-UniRule"/>
</dbReference>
<dbReference type="GO" id="GO:0051301">
    <property type="term" value="P:cell division"/>
    <property type="evidence" value="ECO:0007669"/>
    <property type="project" value="UniProtKB-KW"/>
</dbReference>
<dbReference type="GO" id="GO:0071555">
    <property type="term" value="P:cell wall organization"/>
    <property type="evidence" value="ECO:0007669"/>
    <property type="project" value="UniProtKB-KW"/>
</dbReference>
<dbReference type="GO" id="GO:0009252">
    <property type="term" value="P:peptidoglycan biosynthetic process"/>
    <property type="evidence" value="ECO:0007669"/>
    <property type="project" value="UniProtKB-UniRule"/>
</dbReference>
<dbReference type="GO" id="GO:0008360">
    <property type="term" value="P:regulation of cell shape"/>
    <property type="evidence" value="ECO:0007669"/>
    <property type="project" value="UniProtKB-KW"/>
</dbReference>
<dbReference type="Gene3D" id="3.90.190.20">
    <property type="entry name" value="Mur ligase, C-terminal domain"/>
    <property type="match status" value="1"/>
</dbReference>
<dbReference type="Gene3D" id="3.40.1190.10">
    <property type="entry name" value="Mur-like, catalytic domain"/>
    <property type="match status" value="1"/>
</dbReference>
<dbReference type="Gene3D" id="3.40.50.720">
    <property type="entry name" value="NAD(P)-binding Rossmann-like Domain"/>
    <property type="match status" value="1"/>
</dbReference>
<dbReference type="HAMAP" id="MF_00046">
    <property type="entry name" value="MurC"/>
    <property type="match status" value="1"/>
</dbReference>
<dbReference type="InterPro" id="IPR036565">
    <property type="entry name" value="Mur-like_cat_sf"/>
</dbReference>
<dbReference type="InterPro" id="IPR004101">
    <property type="entry name" value="Mur_ligase_C"/>
</dbReference>
<dbReference type="InterPro" id="IPR036615">
    <property type="entry name" value="Mur_ligase_C_dom_sf"/>
</dbReference>
<dbReference type="InterPro" id="IPR013221">
    <property type="entry name" value="Mur_ligase_cen"/>
</dbReference>
<dbReference type="InterPro" id="IPR000713">
    <property type="entry name" value="Mur_ligase_N"/>
</dbReference>
<dbReference type="InterPro" id="IPR050061">
    <property type="entry name" value="MurCDEF_pg_biosynth"/>
</dbReference>
<dbReference type="InterPro" id="IPR005758">
    <property type="entry name" value="UDP-N-AcMur_Ala_ligase_MurC"/>
</dbReference>
<dbReference type="NCBIfam" id="TIGR01082">
    <property type="entry name" value="murC"/>
    <property type="match status" value="1"/>
</dbReference>
<dbReference type="PANTHER" id="PTHR43445:SF3">
    <property type="entry name" value="UDP-N-ACETYLMURAMATE--L-ALANINE LIGASE"/>
    <property type="match status" value="1"/>
</dbReference>
<dbReference type="PANTHER" id="PTHR43445">
    <property type="entry name" value="UDP-N-ACETYLMURAMATE--L-ALANINE LIGASE-RELATED"/>
    <property type="match status" value="1"/>
</dbReference>
<dbReference type="Pfam" id="PF01225">
    <property type="entry name" value="Mur_ligase"/>
    <property type="match status" value="1"/>
</dbReference>
<dbReference type="Pfam" id="PF02875">
    <property type="entry name" value="Mur_ligase_C"/>
    <property type="match status" value="1"/>
</dbReference>
<dbReference type="Pfam" id="PF08245">
    <property type="entry name" value="Mur_ligase_M"/>
    <property type="match status" value="1"/>
</dbReference>
<dbReference type="SUPFAM" id="SSF51984">
    <property type="entry name" value="MurCD N-terminal domain"/>
    <property type="match status" value="1"/>
</dbReference>
<dbReference type="SUPFAM" id="SSF53623">
    <property type="entry name" value="MurD-like peptide ligases, catalytic domain"/>
    <property type="match status" value="1"/>
</dbReference>
<dbReference type="SUPFAM" id="SSF53244">
    <property type="entry name" value="MurD-like peptide ligases, peptide-binding domain"/>
    <property type="match status" value="1"/>
</dbReference>
<accession>P61677</accession>
<reference key="1">
    <citation type="journal article" date="2003" name="Nucleic Acids Res.">
        <title>The complete genome sequence and analysis of Corynebacterium diphtheriae NCTC13129.</title>
        <authorList>
            <person name="Cerdeno-Tarraga A.-M."/>
            <person name="Efstratiou A."/>
            <person name="Dover L.G."/>
            <person name="Holden M.T.G."/>
            <person name="Pallen M.J."/>
            <person name="Bentley S.D."/>
            <person name="Besra G.S."/>
            <person name="Churcher C.M."/>
            <person name="James K.D."/>
            <person name="De Zoysa A."/>
            <person name="Chillingworth T."/>
            <person name="Cronin A."/>
            <person name="Dowd L."/>
            <person name="Feltwell T."/>
            <person name="Hamlin N."/>
            <person name="Holroyd S."/>
            <person name="Jagels K."/>
            <person name="Moule S."/>
            <person name="Quail M.A."/>
            <person name="Rabbinowitsch E."/>
            <person name="Rutherford K.M."/>
            <person name="Thomson N.R."/>
            <person name="Unwin L."/>
            <person name="Whitehead S."/>
            <person name="Barrell B.G."/>
            <person name="Parkhill J."/>
        </authorList>
    </citation>
    <scope>NUCLEOTIDE SEQUENCE [LARGE SCALE GENOMIC DNA]</scope>
    <source>
        <strain>ATCC 700971 / NCTC 13129 / Biotype gravis</strain>
    </source>
</reference>